<name>T4B_PARTE</name>
<organism>
    <name type="scientific">Paramecium tetraurelia</name>
    <dbReference type="NCBI Taxonomy" id="5888"/>
    <lineage>
        <taxon>Eukaryota</taxon>
        <taxon>Sar</taxon>
        <taxon>Alveolata</taxon>
        <taxon>Ciliophora</taxon>
        <taxon>Intramacronucleata</taxon>
        <taxon>Oligohymenophorea</taxon>
        <taxon>Peniculida</taxon>
        <taxon>Parameciidae</taxon>
        <taxon>Paramecium</taxon>
    </lineage>
</organism>
<protein>
    <recommendedName>
        <fullName>Trichocyst matrix protein T4-B</fullName>
    </recommendedName>
    <alternativeName>
        <fullName>Secretory granule protein T4-B</fullName>
    </alternativeName>
    <alternativeName>
        <fullName>TMP 4-B</fullName>
    </alternativeName>
    <component>
        <recommendedName>
            <fullName>Trichocyst matrix protein T4-B 1</fullName>
        </recommendedName>
    </component>
    <component>
        <recommendedName>
            <fullName>Trichocyst matrix protein T4-B 2</fullName>
        </recommendedName>
    </component>
</protein>
<evidence type="ECO:0000250" key="1"/>
<evidence type="ECO:0000255" key="2"/>
<evidence type="ECO:0000305" key="3"/>
<feature type="signal peptide" evidence="2">
    <location>
        <begin position="1"/>
        <end position="17"/>
    </location>
</feature>
<feature type="propeptide" id="PRO_0000307842" evidence="1">
    <location>
        <begin position="18"/>
        <end position="52"/>
    </location>
</feature>
<feature type="chain" id="PRO_0000307843" description="Trichocyst matrix protein T4-B 1">
    <location>
        <begin position="53"/>
        <end position="189"/>
    </location>
</feature>
<feature type="propeptide" id="PRO_0000307844" evidence="1">
    <location>
        <begin position="190"/>
        <end position="221"/>
    </location>
</feature>
<feature type="chain" id="PRO_0000307845" description="Trichocyst matrix protein T4-B 2">
    <location>
        <begin position="222"/>
        <end position="363"/>
    </location>
</feature>
<feature type="coiled-coil region" evidence="2">
    <location>
        <begin position="85"/>
        <end position="119"/>
    </location>
</feature>
<feature type="coiled-coil region" evidence="2">
    <location>
        <begin position="244"/>
        <end position="352"/>
    </location>
</feature>
<dbReference type="EMBL" id="CT868046">
    <property type="protein sequence ID" value="CAK66634.1"/>
    <property type="molecule type" value="Genomic_DNA"/>
</dbReference>
<dbReference type="RefSeq" id="XP_001434031.1">
    <property type="nucleotide sequence ID" value="XM_001433994.1"/>
</dbReference>
<dbReference type="SMR" id="A0C767"/>
<dbReference type="EnsemblProtists" id="CAK66634">
    <property type="protein sequence ID" value="CAK66634"/>
    <property type="gene ID" value="GSPATT00035764001"/>
</dbReference>
<dbReference type="GeneID" id="5019816"/>
<dbReference type="KEGG" id="ptm:GSPATT00035764001"/>
<dbReference type="eggNOG" id="ENOG502SR74">
    <property type="taxonomic scope" value="Eukaryota"/>
</dbReference>
<dbReference type="HOGENOM" id="CLU_065704_0_0_1"/>
<dbReference type="InParanoid" id="A0C767"/>
<dbReference type="OrthoDB" id="298080at2759"/>
<dbReference type="Proteomes" id="UP000000600">
    <property type="component" value="Partially assembled WGS sequence"/>
</dbReference>
<dbReference type="GO" id="GO:0055039">
    <property type="term" value="C:trichocyst"/>
    <property type="evidence" value="ECO:0007669"/>
    <property type="project" value="UniProtKB-SubCell"/>
</dbReference>
<accession>A0C767</accession>
<keyword id="KW-0175">Coiled coil</keyword>
<keyword id="KW-1185">Reference proteome</keyword>
<keyword id="KW-0732">Signal</keyword>
<reference key="1">
    <citation type="journal article" date="2006" name="Nature">
        <title>Global trends of whole-genome duplications revealed by the ciliate Paramecium tetraurelia.</title>
        <authorList>
            <person name="Aury J.-M."/>
            <person name="Jaillon O."/>
            <person name="Duret L."/>
            <person name="Noel B."/>
            <person name="Jubin C."/>
            <person name="Porcel B.M."/>
            <person name="Segurens B."/>
            <person name="Daubin V."/>
            <person name="Anthouard V."/>
            <person name="Aiach N."/>
            <person name="Arnaiz O."/>
            <person name="Billaut A."/>
            <person name="Beisson J."/>
            <person name="Blanc I."/>
            <person name="Bouhouche K."/>
            <person name="Camara F."/>
            <person name="Duharcourt S."/>
            <person name="Guigo R."/>
            <person name="Gogendeau D."/>
            <person name="Katinka M."/>
            <person name="Keller A.-M."/>
            <person name="Kissmehl R."/>
            <person name="Klotz C."/>
            <person name="Koll F."/>
            <person name="Le Mouel A."/>
            <person name="Lepere G."/>
            <person name="Malinsky S."/>
            <person name="Nowacki M."/>
            <person name="Nowak J.K."/>
            <person name="Plattner H."/>
            <person name="Poulain J."/>
            <person name="Ruiz F."/>
            <person name="Serrano V."/>
            <person name="Zagulski M."/>
            <person name="Dessen P."/>
            <person name="Betermier M."/>
            <person name="Weissenbach J."/>
            <person name="Scarpelli C."/>
            <person name="Schaechter V."/>
            <person name="Sperling L."/>
            <person name="Meyer E."/>
            <person name="Cohen J."/>
            <person name="Wincker P."/>
        </authorList>
    </citation>
    <scope>NUCLEOTIDE SEQUENCE [LARGE SCALE GENOMIC DNA]</scope>
    <source>
        <strain>Stock d4-2</strain>
    </source>
</reference>
<sequence>MARSLTILAIVFAVATARVTKSESPKEILAQVNKDSFGNSILSVLQLQLATGGPVGEIQILLNNIASQLNGDQKKADKVHESDTVAFEKIIADLEQEIAYHQTQIVALSNLRDSTTEALGEAEVEVRVVTSDIANNEKSFADESATRQSQHDTWVRKDAEHVDQMEAIDEASKIVQHLQAGVAFAQLKSRFEKVQAKLMESKHALFKPLINALTQLASKVDNKSIIKILELLAQIRQQLVASRASLLATEERQAANWEVQSSHLSEEHKRLVERKAFLENSIVQFKVTIQEAVEDLEDQTLFLEDAEDSLAIQERWAAEQESQYEAQTFEREQQLEVVERLQEVLTQKLSAASEFLQVREEVF</sequence>
<proteinExistence type="inferred from homology"/>
<gene>
    <name type="primary">T4B</name>
    <name type="ORF">GSPATT00035764001</name>
</gene>
<comment type="function">
    <text>Structural protein that crystallize inside the trichocyst matrix.</text>
</comment>
<comment type="subcellular location">
    <subcellularLocation>
        <location>Trichocyst</location>
    </subcellularLocation>
    <text>These are architecturally complex secretory storage granules-docked at the plasma membrane, ready to rapidly respond to an exocytotic stimulus.</text>
</comment>
<comment type="PTM">
    <text>Two components are produced by post-translational processing from the precursor peptide.</text>
</comment>
<comment type="similarity">
    <text evidence="3">Belongs to the TMP family.</text>
</comment>
<comment type="online information" name="Protein Spotlight">
    <link uri="https://www.proteinspotlight.org/back_issues/003"/>
    <text>The arsenal of Paramecium - Issue 3 of October 2000</text>
</comment>